<dbReference type="EC" id="4.2.1.20" evidence="1"/>
<dbReference type="EMBL" id="AE000782">
    <property type="protein sequence ID" value="AAB89650.1"/>
    <property type="molecule type" value="Genomic_DNA"/>
</dbReference>
<dbReference type="PIR" id="F69449">
    <property type="entry name" value="F69449"/>
</dbReference>
<dbReference type="RefSeq" id="WP_010879096.1">
    <property type="nucleotide sequence ID" value="NC_000917.1"/>
</dbReference>
<dbReference type="SMR" id="O28673"/>
<dbReference type="STRING" id="224325.AF_1599"/>
<dbReference type="PaxDb" id="224325-AF_1599"/>
<dbReference type="EnsemblBacteria" id="AAB89650">
    <property type="protein sequence ID" value="AAB89650"/>
    <property type="gene ID" value="AF_1599"/>
</dbReference>
<dbReference type="GeneID" id="24795344"/>
<dbReference type="KEGG" id="afu:AF_1599"/>
<dbReference type="eggNOG" id="arCOG01086">
    <property type="taxonomic scope" value="Archaea"/>
</dbReference>
<dbReference type="HOGENOM" id="CLU_016734_0_0_2"/>
<dbReference type="OrthoDB" id="25658at2157"/>
<dbReference type="PhylomeDB" id="O28673"/>
<dbReference type="UniPathway" id="UPA00035">
    <property type="reaction ID" value="UER00044"/>
</dbReference>
<dbReference type="Proteomes" id="UP000002199">
    <property type="component" value="Chromosome"/>
</dbReference>
<dbReference type="GO" id="GO:0005829">
    <property type="term" value="C:cytosol"/>
    <property type="evidence" value="ECO:0007669"/>
    <property type="project" value="TreeGrafter"/>
</dbReference>
<dbReference type="GO" id="GO:0004834">
    <property type="term" value="F:tryptophan synthase activity"/>
    <property type="evidence" value="ECO:0007669"/>
    <property type="project" value="UniProtKB-UniRule"/>
</dbReference>
<dbReference type="CDD" id="cd04724">
    <property type="entry name" value="Tryptophan_synthase_alpha"/>
    <property type="match status" value="1"/>
</dbReference>
<dbReference type="FunFam" id="3.20.20.70:FF:000037">
    <property type="entry name" value="Tryptophan synthase alpha chain"/>
    <property type="match status" value="1"/>
</dbReference>
<dbReference type="Gene3D" id="3.20.20.70">
    <property type="entry name" value="Aldolase class I"/>
    <property type="match status" value="1"/>
</dbReference>
<dbReference type="HAMAP" id="MF_00131">
    <property type="entry name" value="Trp_synth_alpha"/>
    <property type="match status" value="1"/>
</dbReference>
<dbReference type="InterPro" id="IPR013785">
    <property type="entry name" value="Aldolase_TIM"/>
</dbReference>
<dbReference type="InterPro" id="IPR011060">
    <property type="entry name" value="RibuloseP-bd_barrel"/>
</dbReference>
<dbReference type="InterPro" id="IPR018204">
    <property type="entry name" value="Trp_synthase_alpha_AS"/>
</dbReference>
<dbReference type="InterPro" id="IPR002028">
    <property type="entry name" value="Trp_synthase_suA"/>
</dbReference>
<dbReference type="NCBIfam" id="TIGR00262">
    <property type="entry name" value="trpA"/>
    <property type="match status" value="1"/>
</dbReference>
<dbReference type="PANTHER" id="PTHR43406:SF1">
    <property type="entry name" value="TRYPTOPHAN SYNTHASE ALPHA CHAIN, CHLOROPLASTIC"/>
    <property type="match status" value="1"/>
</dbReference>
<dbReference type="PANTHER" id="PTHR43406">
    <property type="entry name" value="TRYPTOPHAN SYNTHASE, ALPHA CHAIN"/>
    <property type="match status" value="1"/>
</dbReference>
<dbReference type="Pfam" id="PF00290">
    <property type="entry name" value="Trp_syntA"/>
    <property type="match status" value="1"/>
</dbReference>
<dbReference type="SUPFAM" id="SSF51366">
    <property type="entry name" value="Ribulose-phoshate binding barrel"/>
    <property type="match status" value="1"/>
</dbReference>
<dbReference type="PROSITE" id="PS00167">
    <property type="entry name" value="TRP_SYNTHASE_ALPHA"/>
    <property type="match status" value="1"/>
</dbReference>
<comment type="function">
    <text evidence="1">The alpha subunit is responsible for the aldol cleavage of indoleglycerol phosphate to indole and glyceraldehyde 3-phosphate.</text>
</comment>
<comment type="catalytic activity">
    <reaction evidence="1">
        <text>(1S,2R)-1-C-(indol-3-yl)glycerol 3-phosphate + L-serine = D-glyceraldehyde 3-phosphate + L-tryptophan + H2O</text>
        <dbReference type="Rhea" id="RHEA:10532"/>
        <dbReference type="ChEBI" id="CHEBI:15377"/>
        <dbReference type="ChEBI" id="CHEBI:33384"/>
        <dbReference type="ChEBI" id="CHEBI:57912"/>
        <dbReference type="ChEBI" id="CHEBI:58866"/>
        <dbReference type="ChEBI" id="CHEBI:59776"/>
        <dbReference type="EC" id="4.2.1.20"/>
    </reaction>
</comment>
<comment type="pathway">
    <text evidence="1">Amino-acid biosynthesis; L-tryptophan biosynthesis; L-tryptophan from chorismate: step 5/5.</text>
</comment>
<comment type="subunit">
    <text evidence="1">Tetramer of two alpha and two beta chains.</text>
</comment>
<comment type="similarity">
    <text evidence="1">Belongs to the TrpA family.</text>
</comment>
<sequence>MIDRSLIVFFTACYPTAEKTVEFMLTAAESGADVIELGVPFSDPVADGKTIQESYVRALRNFRVERVFEIAKAFRAESDKPLVLMSYYNPIYRRGVESFVEKAYSSGIDAMLVVDLPYDEAGDFVEVCSRTGMKNVFLAAPNTPEDRLRAMDELSAFVYLVSTYGVTGERDRISPLAFEALKRAKGICRKPVAVGFGVSKADHVRQLISAGADGVVVGSAFVRLINEKGERATEDIRALTENLRSGLV</sequence>
<name>TRPA_ARCFU</name>
<feature type="chain" id="PRO_0000098884" description="Tryptophan synthase alpha chain">
    <location>
        <begin position="1"/>
        <end position="248"/>
    </location>
</feature>
<feature type="active site" description="Proton acceptor" evidence="1">
    <location>
        <position position="36"/>
    </location>
</feature>
<feature type="active site" description="Proton acceptor" evidence="1">
    <location>
        <position position="47"/>
    </location>
</feature>
<reference key="1">
    <citation type="journal article" date="1997" name="Nature">
        <title>The complete genome sequence of the hyperthermophilic, sulphate-reducing archaeon Archaeoglobus fulgidus.</title>
        <authorList>
            <person name="Klenk H.-P."/>
            <person name="Clayton R.A."/>
            <person name="Tomb J.-F."/>
            <person name="White O."/>
            <person name="Nelson K.E."/>
            <person name="Ketchum K.A."/>
            <person name="Dodson R.J."/>
            <person name="Gwinn M.L."/>
            <person name="Hickey E.K."/>
            <person name="Peterson J.D."/>
            <person name="Richardson D.L."/>
            <person name="Kerlavage A.R."/>
            <person name="Graham D.E."/>
            <person name="Kyrpides N.C."/>
            <person name="Fleischmann R.D."/>
            <person name="Quackenbush J."/>
            <person name="Lee N.H."/>
            <person name="Sutton G.G."/>
            <person name="Gill S.R."/>
            <person name="Kirkness E.F."/>
            <person name="Dougherty B.A."/>
            <person name="McKenney K."/>
            <person name="Adams M.D."/>
            <person name="Loftus B.J."/>
            <person name="Peterson S.N."/>
            <person name="Reich C.I."/>
            <person name="McNeil L.K."/>
            <person name="Badger J.H."/>
            <person name="Glodek A."/>
            <person name="Zhou L."/>
            <person name="Overbeek R."/>
            <person name="Gocayne J.D."/>
            <person name="Weidman J.F."/>
            <person name="McDonald L.A."/>
            <person name="Utterback T.R."/>
            <person name="Cotton M.D."/>
            <person name="Spriggs T."/>
            <person name="Artiach P."/>
            <person name="Kaine B.P."/>
            <person name="Sykes S.M."/>
            <person name="Sadow P.W."/>
            <person name="D'Andrea K.P."/>
            <person name="Bowman C."/>
            <person name="Fujii C."/>
            <person name="Garland S.A."/>
            <person name="Mason T.M."/>
            <person name="Olsen G.J."/>
            <person name="Fraser C.M."/>
            <person name="Smith H.O."/>
            <person name="Woese C.R."/>
            <person name="Venter J.C."/>
        </authorList>
    </citation>
    <scope>NUCLEOTIDE SEQUENCE [LARGE SCALE GENOMIC DNA]</scope>
    <source>
        <strain>ATCC 49558 / DSM 4304 / JCM 9628 / NBRC 100126 / VC-16</strain>
    </source>
</reference>
<organism>
    <name type="scientific">Archaeoglobus fulgidus (strain ATCC 49558 / DSM 4304 / JCM 9628 / NBRC 100126 / VC-16)</name>
    <dbReference type="NCBI Taxonomy" id="224325"/>
    <lineage>
        <taxon>Archaea</taxon>
        <taxon>Methanobacteriati</taxon>
        <taxon>Methanobacteriota</taxon>
        <taxon>Archaeoglobi</taxon>
        <taxon>Archaeoglobales</taxon>
        <taxon>Archaeoglobaceae</taxon>
        <taxon>Archaeoglobus</taxon>
    </lineage>
</organism>
<evidence type="ECO:0000255" key="1">
    <source>
        <dbReference type="HAMAP-Rule" id="MF_00131"/>
    </source>
</evidence>
<gene>
    <name evidence="1" type="primary">trpA</name>
    <name type="ordered locus">AF_1599</name>
</gene>
<accession>O28673</accession>
<protein>
    <recommendedName>
        <fullName evidence="1">Tryptophan synthase alpha chain</fullName>
        <ecNumber evidence="1">4.2.1.20</ecNumber>
    </recommendedName>
</protein>
<keyword id="KW-0028">Amino-acid biosynthesis</keyword>
<keyword id="KW-0057">Aromatic amino acid biosynthesis</keyword>
<keyword id="KW-0456">Lyase</keyword>
<keyword id="KW-1185">Reference proteome</keyword>
<keyword id="KW-0822">Tryptophan biosynthesis</keyword>
<proteinExistence type="inferred from homology"/>